<geneLocation type="chloroplast"/>
<accession>Q8S8W0</accession>
<feature type="chain" id="PRO_0000061783" description="Cytochrome b6">
    <location>
        <begin position="1"/>
        <end position="215"/>
    </location>
</feature>
<feature type="transmembrane region" description="Helical" evidence="1">
    <location>
        <begin position="32"/>
        <end position="52"/>
    </location>
</feature>
<feature type="transmembrane region" description="Helical" evidence="1">
    <location>
        <begin position="90"/>
        <end position="110"/>
    </location>
</feature>
<feature type="transmembrane region" description="Helical" evidence="1">
    <location>
        <begin position="116"/>
        <end position="136"/>
    </location>
</feature>
<feature type="transmembrane region" description="Helical" evidence="1">
    <location>
        <begin position="186"/>
        <end position="206"/>
    </location>
</feature>
<feature type="binding site" description="covalent" evidence="1">
    <location>
        <position position="35"/>
    </location>
    <ligand>
        <name>heme c</name>
        <dbReference type="ChEBI" id="CHEBI:61717"/>
    </ligand>
</feature>
<feature type="binding site" description="axial binding residue" evidence="1">
    <location>
        <position position="86"/>
    </location>
    <ligand>
        <name>heme b</name>
        <dbReference type="ChEBI" id="CHEBI:60344"/>
        <label>2</label>
    </ligand>
    <ligandPart>
        <name>Fe</name>
        <dbReference type="ChEBI" id="CHEBI:18248"/>
    </ligandPart>
</feature>
<feature type="binding site" description="axial binding residue" evidence="1">
    <location>
        <position position="100"/>
    </location>
    <ligand>
        <name>heme b</name>
        <dbReference type="ChEBI" id="CHEBI:60344"/>
        <label>1</label>
    </ligand>
    <ligandPart>
        <name>Fe</name>
        <dbReference type="ChEBI" id="CHEBI:18248"/>
    </ligandPart>
</feature>
<feature type="binding site" description="axial binding residue" evidence="1">
    <location>
        <position position="187"/>
    </location>
    <ligand>
        <name>heme b</name>
        <dbReference type="ChEBI" id="CHEBI:60344"/>
        <label>2</label>
    </ligand>
    <ligandPart>
        <name>Fe</name>
        <dbReference type="ChEBI" id="CHEBI:18248"/>
    </ligandPart>
</feature>
<feature type="binding site" description="axial binding residue" evidence="1">
    <location>
        <position position="202"/>
    </location>
    <ligand>
        <name>heme b</name>
        <dbReference type="ChEBI" id="CHEBI:60344"/>
        <label>1</label>
    </ligand>
    <ligandPart>
        <name>Fe</name>
        <dbReference type="ChEBI" id="CHEBI:18248"/>
    </ligandPart>
</feature>
<organism>
    <name type="scientific">Atropa belladonna</name>
    <name type="common">Belladonna</name>
    <name type="synonym">Deadly nightshade</name>
    <dbReference type="NCBI Taxonomy" id="33113"/>
    <lineage>
        <taxon>Eukaryota</taxon>
        <taxon>Viridiplantae</taxon>
        <taxon>Streptophyta</taxon>
        <taxon>Embryophyta</taxon>
        <taxon>Tracheophyta</taxon>
        <taxon>Spermatophyta</taxon>
        <taxon>Magnoliopsida</taxon>
        <taxon>eudicotyledons</taxon>
        <taxon>Gunneridae</taxon>
        <taxon>Pentapetalae</taxon>
        <taxon>asterids</taxon>
        <taxon>lamiids</taxon>
        <taxon>Solanales</taxon>
        <taxon>Solanaceae</taxon>
        <taxon>Solanoideae</taxon>
        <taxon>Hyoscyameae</taxon>
        <taxon>Atropa</taxon>
    </lineage>
</organism>
<protein>
    <recommendedName>
        <fullName evidence="1">Cytochrome b6</fullName>
    </recommendedName>
</protein>
<keyword id="KW-0150">Chloroplast</keyword>
<keyword id="KW-0249">Electron transport</keyword>
<keyword id="KW-0349">Heme</keyword>
<keyword id="KW-0408">Iron</keyword>
<keyword id="KW-0472">Membrane</keyword>
<keyword id="KW-0479">Metal-binding</keyword>
<keyword id="KW-0602">Photosynthesis</keyword>
<keyword id="KW-0934">Plastid</keyword>
<keyword id="KW-0793">Thylakoid</keyword>
<keyword id="KW-0812">Transmembrane</keyword>
<keyword id="KW-1133">Transmembrane helix</keyword>
<keyword id="KW-0813">Transport</keyword>
<comment type="function">
    <text evidence="1">Component of the cytochrome b6-f complex, which mediates electron transfer between photosystem II (PSII) and photosystem I (PSI), cyclic electron flow around PSI, and state transitions.</text>
</comment>
<comment type="cofactor">
    <cofactor evidence="1">
        <name>heme b</name>
        <dbReference type="ChEBI" id="CHEBI:60344"/>
    </cofactor>
    <text evidence="1">Binds 2 heme b groups non-covalently with two histidine residues as axial ligands.</text>
</comment>
<comment type="cofactor">
    <cofactor evidence="1">
        <name>heme c</name>
        <dbReference type="ChEBI" id="CHEBI:61717"/>
    </cofactor>
    <text evidence="1">Binds one heme group covalently by a single cysteine link with no axial amino acid ligand. This heme was named heme ci.</text>
</comment>
<comment type="subunit">
    <text evidence="1">The 4 large subunits of the cytochrome b6-f complex are cytochrome b6, subunit IV (17 kDa polypeptide, PetD), cytochrome f and the Rieske protein, while the 4 small subunits are PetG, PetL, PetM and PetN. The complex functions as a dimer.</text>
</comment>
<comment type="subcellular location">
    <subcellularLocation>
        <location evidence="1">Plastid</location>
        <location evidence="1">Chloroplast thylakoid membrane</location>
        <topology evidence="1">Multi-pass membrane protein</topology>
    </subcellularLocation>
</comment>
<comment type="miscellaneous">
    <text evidence="1">Heme 1 (or BH or b566) is high-potential and absorbs at about 566 nm, and heme 2 (or BL or b562) is low-potential and absorbs at about 562 nm.</text>
</comment>
<comment type="similarity">
    <text evidence="1">Belongs to the cytochrome b family. PetB subfamily.</text>
</comment>
<gene>
    <name evidence="1" type="primary">petB</name>
</gene>
<dbReference type="EMBL" id="AJ316582">
    <property type="protein sequence ID" value="CAC88074.1"/>
    <property type="molecule type" value="Genomic_DNA"/>
</dbReference>
<dbReference type="RefSeq" id="NP_783261.1">
    <property type="nucleotide sequence ID" value="NC_004561.1"/>
</dbReference>
<dbReference type="SMR" id="Q8S8W0"/>
<dbReference type="GeneID" id="806467"/>
<dbReference type="GO" id="GO:0009535">
    <property type="term" value="C:chloroplast thylakoid membrane"/>
    <property type="evidence" value="ECO:0007669"/>
    <property type="project" value="UniProtKB-SubCell"/>
</dbReference>
<dbReference type="GO" id="GO:0045158">
    <property type="term" value="F:electron transporter, transferring electrons within cytochrome b6/f complex of photosystem II activity"/>
    <property type="evidence" value="ECO:0007669"/>
    <property type="project" value="UniProtKB-UniRule"/>
</dbReference>
<dbReference type="GO" id="GO:0046872">
    <property type="term" value="F:metal ion binding"/>
    <property type="evidence" value="ECO:0007669"/>
    <property type="project" value="UniProtKB-KW"/>
</dbReference>
<dbReference type="GO" id="GO:0016491">
    <property type="term" value="F:oxidoreductase activity"/>
    <property type="evidence" value="ECO:0007669"/>
    <property type="project" value="InterPro"/>
</dbReference>
<dbReference type="GO" id="GO:0015979">
    <property type="term" value="P:photosynthesis"/>
    <property type="evidence" value="ECO:0007669"/>
    <property type="project" value="UniProtKB-UniRule"/>
</dbReference>
<dbReference type="GO" id="GO:0022904">
    <property type="term" value="P:respiratory electron transport chain"/>
    <property type="evidence" value="ECO:0007669"/>
    <property type="project" value="InterPro"/>
</dbReference>
<dbReference type="CDD" id="cd00284">
    <property type="entry name" value="Cytochrome_b_N"/>
    <property type="match status" value="1"/>
</dbReference>
<dbReference type="FunFam" id="1.20.810.10:FF:000001">
    <property type="entry name" value="Cytochrome b6"/>
    <property type="match status" value="1"/>
</dbReference>
<dbReference type="Gene3D" id="1.20.810.10">
    <property type="entry name" value="Cytochrome Bc1 Complex, Chain C"/>
    <property type="match status" value="1"/>
</dbReference>
<dbReference type="HAMAP" id="MF_00633">
    <property type="entry name" value="Cytb6_f_cytb6"/>
    <property type="match status" value="1"/>
</dbReference>
<dbReference type="InterPro" id="IPR005797">
    <property type="entry name" value="Cyt_b/b6_N"/>
</dbReference>
<dbReference type="InterPro" id="IPR023530">
    <property type="entry name" value="Cyt_B6_PetB"/>
</dbReference>
<dbReference type="InterPro" id="IPR027387">
    <property type="entry name" value="Cytb/b6-like_sf"/>
</dbReference>
<dbReference type="InterPro" id="IPR048259">
    <property type="entry name" value="Cytochrome_b_N_euk/bac"/>
</dbReference>
<dbReference type="InterPro" id="IPR016174">
    <property type="entry name" value="Di-haem_cyt_TM"/>
</dbReference>
<dbReference type="NCBIfam" id="NF002990">
    <property type="entry name" value="PRK03735.1"/>
    <property type="match status" value="1"/>
</dbReference>
<dbReference type="PANTHER" id="PTHR19271">
    <property type="entry name" value="CYTOCHROME B"/>
    <property type="match status" value="1"/>
</dbReference>
<dbReference type="PANTHER" id="PTHR19271:SF16">
    <property type="entry name" value="CYTOCHROME B"/>
    <property type="match status" value="1"/>
</dbReference>
<dbReference type="Pfam" id="PF00033">
    <property type="entry name" value="Cytochrome_B"/>
    <property type="match status" value="1"/>
</dbReference>
<dbReference type="PIRSF" id="PIRSF000032">
    <property type="entry name" value="Cytochrome_b6"/>
    <property type="match status" value="1"/>
</dbReference>
<dbReference type="SUPFAM" id="SSF81342">
    <property type="entry name" value="Transmembrane di-heme cytochromes"/>
    <property type="match status" value="1"/>
</dbReference>
<dbReference type="PROSITE" id="PS51002">
    <property type="entry name" value="CYTB_NTER"/>
    <property type="match status" value="1"/>
</dbReference>
<sequence>MSKVYDWFEERLEIQAIADDITSKYVPPHVNIFYCLGGITLTCFLVQVATGFAMTFYYRPTVTEAFASVQYIMTEANFGWLIRSVHRWSASMMVLMMILHVFRVYLTGGFKKPRELTWVTGVVLAVLTASFGVTGYSLPWDQIGYWAVKIVTGVPDAIPVIGSPLVELLRGSASVGQSTLTRFYSLHTFVLPLLTAVFMLMHFPMIRKQGISGPL</sequence>
<proteinExistence type="inferred from homology"/>
<reference key="1">
    <citation type="journal article" date="2002" name="Mol. Biol. Evol.">
        <title>The plastid chromosome of Atropa belladonna and its comparison with that of Nicotiana tabacum: the role of RNA editing in generating divergence in the process of plant speciation.</title>
        <authorList>
            <person name="Schmitz-Linneweber C."/>
            <person name="Regel R."/>
            <person name="Du T.G."/>
            <person name="Hupfer H."/>
            <person name="Herrmann R.G."/>
            <person name="Maier R.M."/>
        </authorList>
    </citation>
    <scope>NUCLEOTIDE SEQUENCE [LARGE SCALE GENOMIC DNA]</scope>
    <source>
        <strain>cv. Ab5p(kan)</strain>
    </source>
</reference>
<evidence type="ECO:0000255" key="1">
    <source>
        <dbReference type="HAMAP-Rule" id="MF_00633"/>
    </source>
</evidence>
<name>CYB6_ATRBE</name>